<dbReference type="EC" id="6.1.1.16" evidence="1"/>
<dbReference type="EMBL" id="AE017340">
    <property type="protein sequence ID" value="AAV81873.1"/>
    <property type="molecule type" value="Genomic_DNA"/>
</dbReference>
<dbReference type="RefSeq" id="WP_011234284.1">
    <property type="nucleotide sequence ID" value="NC_006512.1"/>
</dbReference>
<dbReference type="SMR" id="Q5QYP3"/>
<dbReference type="STRING" id="283942.IL1033"/>
<dbReference type="GeneID" id="41336199"/>
<dbReference type="KEGG" id="ilo:IL1033"/>
<dbReference type="eggNOG" id="COG0215">
    <property type="taxonomic scope" value="Bacteria"/>
</dbReference>
<dbReference type="HOGENOM" id="CLU_013528_0_1_6"/>
<dbReference type="OrthoDB" id="9815130at2"/>
<dbReference type="Proteomes" id="UP000001171">
    <property type="component" value="Chromosome"/>
</dbReference>
<dbReference type="GO" id="GO:0005829">
    <property type="term" value="C:cytosol"/>
    <property type="evidence" value="ECO:0007669"/>
    <property type="project" value="TreeGrafter"/>
</dbReference>
<dbReference type="GO" id="GO:0005524">
    <property type="term" value="F:ATP binding"/>
    <property type="evidence" value="ECO:0007669"/>
    <property type="project" value="UniProtKB-UniRule"/>
</dbReference>
<dbReference type="GO" id="GO:0004817">
    <property type="term" value="F:cysteine-tRNA ligase activity"/>
    <property type="evidence" value="ECO:0007669"/>
    <property type="project" value="UniProtKB-UniRule"/>
</dbReference>
<dbReference type="GO" id="GO:0008270">
    <property type="term" value="F:zinc ion binding"/>
    <property type="evidence" value="ECO:0007669"/>
    <property type="project" value="UniProtKB-UniRule"/>
</dbReference>
<dbReference type="GO" id="GO:0006423">
    <property type="term" value="P:cysteinyl-tRNA aminoacylation"/>
    <property type="evidence" value="ECO:0007669"/>
    <property type="project" value="UniProtKB-UniRule"/>
</dbReference>
<dbReference type="CDD" id="cd07963">
    <property type="entry name" value="Anticodon_Ia_Cys"/>
    <property type="match status" value="1"/>
</dbReference>
<dbReference type="CDD" id="cd00672">
    <property type="entry name" value="CysRS_core"/>
    <property type="match status" value="1"/>
</dbReference>
<dbReference type="FunFam" id="3.40.50.620:FF:000009">
    <property type="entry name" value="Cysteine--tRNA ligase"/>
    <property type="match status" value="1"/>
</dbReference>
<dbReference type="Gene3D" id="1.20.120.1910">
    <property type="entry name" value="Cysteine-tRNA ligase, C-terminal anti-codon recognition domain"/>
    <property type="match status" value="1"/>
</dbReference>
<dbReference type="Gene3D" id="3.40.50.620">
    <property type="entry name" value="HUPs"/>
    <property type="match status" value="1"/>
</dbReference>
<dbReference type="HAMAP" id="MF_00041">
    <property type="entry name" value="Cys_tRNA_synth"/>
    <property type="match status" value="1"/>
</dbReference>
<dbReference type="InterPro" id="IPR015803">
    <property type="entry name" value="Cys-tRNA-ligase"/>
</dbReference>
<dbReference type="InterPro" id="IPR015273">
    <property type="entry name" value="Cys-tRNA-synt_Ia_DALR"/>
</dbReference>
<dbReference type="InterPro" id="IPR024909">
    <property type="entry name" value="Cys-tRNA/MSH_ligase"/>
</dbReference>
<dbReference type="InterPro" id="IPR056411">
    <property type="entry name" value="CysS_C"/>
</dbReference>
<dbReference type="InterPro" id="IPR014729">
    <property type="entry name" value="Rossmann-like_a/b/a_fold"/>
</dbReference>
<dbReference type="InterPro" id="IPR032678">
    <property type="entry name" value="tRNA-synt_1_cat_dom"/>
</dbReference>
<dbReference type="InterPro" id="IPR009080">
    <property type="entry name" value="tRNAsynth_Ia_anticodon-bd"/>
</dbReference>
<dbReference type="NCBIfam" id="TIGR00435">
    <property type="entry name" value="cysS"/>
    <property type="match status" value="1"/>
</dbReference>
<dbReference type="PANTHER" id="PTHR10890:SF3">
    <property type="entry name" value="CYSTEINE--TRNA LIGASE, CYTOPLASMIC"/>
    <property type="match status" value="1"/>
</dbReference>
<dbReference type="PANTHER" id="PTHR10890">
    <property type="entry name" value="CYSTEINYL-TRNA SYNTHETASE"/>
    <property type="match status" value="1"/>
</dbReference>
<dbReference type="Pfam" id="PF23493">
    <property type="entry name" value="CysS_C"/>
    <property type="match status" value="1"/>
</dbReference>
<dbReference type="Pfam" id="PF09190">
    <property type="entry name" value="DALR_2"/>
    <property type="match status" value="1"/>
</dbReference>
<dbReference type="Pfam" id="PF01406">
    <property type="entry name" value="tRNA-synt_1e"/>
    <property type="match status" value="1"/>
</dbReference>
<dbReference type="PRINTS" id="PR00983">
    <property type="entry name" value="TRNASYNTHCYS"/>
</dbReference>
<dbReference type="SMART" id="SM00840">
    <property type="entry name" value="DALR_2"/>
    <property type="match status" value="1"/>
</dbReference>
<dbReference type="SUPFAM" id="SSF47323">
    <property type="entry name" value="Anticodon-binding domain of a subclass of class I aminoacyl-tRNA synthetases"/>
    <property type="match status" value="1"/>
</dbReference>
<dbReference type="SUPFAM" id="SSF52374">
    <property type="entry name" value="Nucleotidylyl transferase"/>
    <property type="match status" value="1"/>
</dbReference>
<name>SYC_IDILO</name>
<proteinExistence type="inferred from homology"/>
<comment type="catalytic activity">
    <reaction evidence="1">
        <text>tRNA(Cys) + L-cysteine + ATP = L-cysteinyl-tRNA(Cys) + AMP + diphosphate</text>
        <dbReference type="Rhea" id="RHEA:17773"/>
        <dbReference type="Rhea" id="RHEA-COMP:9661"/>
        <dbReference type="Rhea" id="RHEA-COMP:9679"/>
        <dbReference type="ChEBI" id="CHEBI:30616"/>
        <dbReference type="ChEBI" id="CHEBI:33019"/>
        <dbReference type="ChEBI" id="CHEBI:35235"/>
        <dbReference type="ChEBI" id="CHEBI:78442"/>
        <dbReference type="ChEBI" id="CHEBI:78517"/>
        <dbReference type="ChEBI" id="CHEBI:456215"/>
        <dbReference type="EC" id="6.1.1.16"/>
    </reaction>
</comment>
<comment type="cofactor">
    <cofactor evidence="1">
        <name>Zn(2+)</name>
        <dbReference type="ChEBI" id="CHEBI:29105"/>
    </cofactor>
    <text evidence="1">Binds 1 zinc ion per subunit.</text>
</comment>
<comment type="subunit">
    <text evidence="1">Monomer.</text>
</comment>
<comment type="subcellular location">
    <subcellularLocation>
        <location evidence="1">Cytoplasm</location>
    </subcellularLocation>
</comment>
<comment type="similarity">
    <text evidence="1">Belongs to the class-I aminoacyl-tRNA synthetase family.</text>
</comment>
<protein>
    <recommendedName>
        <fullName evidence="1">Cysteine--tRNA ligase</fullName>
        <ecNumber evidence="1">6.1.1.16</ecNumber>
    </recommendedName>
    <alternativeName>
        <fullName evidence="1">Cysteinyl-tRNA synthetase</fullName>
        <shortName evidence="1">CysRS</shortName>
    </alternativeName>
</protein>
<organism>
    <name type="scientific">Idiomarina loihiensis (strain ATCC BAA-735 / DSM 15497 / L2-TR)</name>
    <dbReference type="NCBI Taxonomy" id="283942"/>
    <lineage>
        <taxon>Bacteria</taxon>
        <taxon>Pseudomonadati</taxon>
        <taxon>Pseudomonadota</taxon>
        <taxon>Gammaproteobacteria</taxon>
        <taxon>Alteromonadales</taxon>
        <taxon>Idiomarinaceae</taxon>
        <taxon>Idiomarina</taxon>
    </lineage>
</organism>
<keyword id="KW-0030">Aminoacyl-tRNA synthetase</keyword>
<keyword id="KW-0067">ATP-binding</keyword>
<keyword id="KW-0963">Cytoplasm</keyword>
<keyword id="KW-0436">Ligase</keyword>
<keyword id="KW-0479">Metal-binding</keyword>
<keyword id="KW-0547">Nucleotide-binding</keyword>
<keyword id="KW-0648">Protein biosynthesis</keyword>
<keyword id="KW-1185">Reference proteome</keyword>
<keyword id="KW-0862">Zinc</keyword>
<evidence type="ECO:0000255" key="1">
    <source>
        <dbReference type="HAMAP-Rule" id="MF_00041"/>
    </source>
</evidence>
<accession>Q5QYP3</accession>
<gene>
    <name evidence="1" type="primary">cysS</name>
    <name type="ordered locus">IL1033</name>
</gene>
<reference key="1">
    <citation type="journal article" date="2004" name="Proc. Natl. Acad. Sci. U.S.A.">
        <title>Genome sequence of the deep-sea gamma-proteobacterium Idiomarina loihiensis reveals amino acid fermentation as a source of carbon and energy.</title>
        <authorList>
            <person name="Hou S."/>
            <person name="Saw J.H."/>
            <person name="Lee K.S."/>
            <person name="Freitas T.A."/>
            <person name="Belisle C."/>
            <person name="Kawarabayasi Y."/>
            <person name="Donachie S.P."/>
            <person name="Pikina A."/>
            <person name="Galperin M.Y."/>
            <person name="Koonin E.V."/>
            <person name="Makarova K.S."/>
            <person name="Omelchenko M.V."/>
            <person name="Sorokin A."/>
            <person name="Wolf Y.I."/>
            <person name="Li Q.X."/>
            <person name="Keum Y.S."/>
            <person name="Campbell S."/>
            <person name="Denery J."/>
            <person name="Aizawa S."/>
            <person name="Shibata S."/>
            <person name="Malahoff A."/>
            <person name="Alam M."/>
        </authorList>
    </citation>
    <scope>NUCLEOTIDE SEQUENCE [LARGE SCALE GENOMIC DNA]</scope>
    <source>
        <strain>ATCC BAA-735 / DSM 15497 / L2-TR</strain>
    </source>
</reference>
<sequence length="459" mass="52386">MALTVFNTLTRKKQLFEPIQPGHVGIYVCGVTTYDYCHIGHARTYVAFDIVVRYLRKLGYSVKYVRNITDLDDKIIKRAAENGEDFHQVTERFIREMHKDFDALNLVRPDIEPRVTSHMDEIILMIERLIENGNAYEAGNGDVLFDVSTFNDYGKLSRQDLEQLQAGSRVDVDAAKQDPLDFVLWKSAKPGEPSWSSPWGEGRPGWHIECSAMNKKHLGSTFDIHGGGSDLSFPHHENEIAQSCCANQSEYVKYWMHSGMVQVDNEKMSKSLGNFFTIRSVLEQYDAETVRYFLLSSHYRSQLNYTQENLDQAHSALERLYTALRDITPQTASEELRSKYWQSFQQAMDDDLNAPEAMSVLFEIAREINRNRESAPDTAAQLAHVLLELAEVMGLLQQSPEEFLQGDDDDVAKIEALIAKRNQAREDKDWAAADEARDELTNMGIVLEDGAEGTRWRRA</sequence>
<feature type="chain" id="PRO_0000159411" description="Cysteine--tRNA ligase">
    <location>
        <begin position="1"/>
        <end position="459"/>
    </location>
</feature>
<feature type="short sequence motif" description="'HIGH' region">
    <location>
        <begin position="31"/>
        <end position="41"/>
    </location>
</feature>
<feature type="short sequence motif" description="'KMSKS' region">
    <location>
        <begin position="267"/>
        <end position="271"/>
    </location>
</feature>
<feature type="binding site" evidence="1">
    <location>
        <position position="29"/>
    </location>
    <ligand>
        <name>Zn(2+)</name>
        <dbReference type="ChEBI" id="CHEBI:29105"/>
    </ligand>
</feature>
<feature type="binding site" evidence="1">
    <location>
        <position position="210"/>
    </location>
    <ligand>
        <name>Zn(2+)</name>
        <dbReference type="ChEBI" id="CHEBI:29105"/>
    </ligand>
</feature>
<feature type="binding site" evidence="1">
    <location>
        <position position="235"/>
    </location>
    <ligand>
        <name>Zn(2+)</name>
        <dbReference type="ChEBI" id="CHEBI:29105"/>
    </ligand>
</feature>
<feature type="binding site" evidence="1">
    <location>
        <position position="239"/>
    </location>
    <ligand>
        <name>Zn(2+)</name>
        <dbReference type="ChEBI" id="CHEBI:29105"/>
    </ligand>
</feature>
<feature type="binding site" evidence="1">
    <location>
        <position position="270"/>
    </location>
    <ligand>
        <name>ATP</name>
        <dbReference type="ChEBI" id="CHEBI:30616"/>
    </ligand>
</feature>